<feature type="signal peptide" evidence="2">
    <location>
        <begin position="1"/>
        <end position="51"/>
    </location>
</feature>
<feature type="chain" id="PRO_0000434522" description="Leucine-rich repeat transmembrane protein FLRT1">
    <location>
        <begin position="52"/>
        <end position="674"/>
    </location>
</feature>
<feature type="topological domain" description="Extracellular" evidence="8">
    <location>
        <begin position="52"/>
        <end position="552"/>
    </location>
</feature>
<feature type="transmembrane region" description="Helical" evidence="2">
    <location>
        <begin position="553"/>
        <end position="573"/>
    </location>
</feature>
<feature type="topological domain" description="Cytoplasmic" evidence="8">
    <location>
        <begin position="574"/>
        <end position="674"/>
    </location>
</feature>
<feature type="domain" description="LRRNT" evidence="2">
    <location>
        <begin position="54"/>
        <end position="80"/>
    </location>
</feature>
<feature type="repeat" description="LRR 1" evidence="2">
    <location>
        <begin position="81"/>
        <end position="105"/>
    </location>
</feature>
<feature type="repeat" description="LRR 2" evidence="2">
    <location>
        <begin position="106"/>
        <end position="126"/>
    </location>
</feature>
<feature type="repeat" description="LRR 3" evidence="2">
    <location>
        <begin position="127"/>
        <end position="149"/>
    </location>
</feature>
<feature type="repeat" description="LRR 4" evidence="2">
    <location>
        <begin position="151"/>
        <end position="175"/>
    </location>
</feature>
<feature type="repeat" description="LRR 5" evidence="2">
    <location>
        <begin position="176"/>
        <end position="197"/>
    </location>
</feature>
<feature type="repeat" description="LRR 6" evidence="2">
    <location>
        <begin position="198"/>
        <end position="220"/>
    </location>
</feature>
<feature type="repeat" description="LRR 7" evidence="2">
    <location>
        <begin position="222"/>
        <end position="246"/>
    </location>
</feature>
<feature type="repeat" description="LRR 8" evidence="2">
    <location>
        <begin position="247"/>
        <end position="269"/>
    </location>
</feature>
<feature type="repeat" description="LRR 9" evidence="2">
    <location>
        <begin position="270"/>
        <end position="292"/>
    </location>
</feature>
<feature type="repeat" description="LRR 10" evidence="2">
    <location>
        <begin position="293"/>
        <end position="316"/>
    </location>
</feature>
<feature type="domain" description="LRRCT" evidence="2">
    <location>
        <begin position="328"/>
        <end position="379"/>
    </location>
</feature>
<feature type="domain" description="Fibronectin type-III" evidence="3">
    <location>
        <begin position="437"/>
        <end position="532"/>
    </location>
</feature>
<feature type="modified residue" description="Phosphotyrosine" evidence="10">
    <location>
        <position position="600"/>
    </location>
</feature>
<feature type="modified residue" description="Phosphotyrosine" evidence="10">
    <location>
        <position position="633"/>
    </location>
</feature>
<feature type="modified residue" description="Phosphotyrosine" evidence="10">
    <location>
        <position position="671"/>
    </location>
</feature>
<feature type="glycosylation site" description="N-linked (GlcNAc...) asparagine" evidence="2">
    <location>
        <position position="305"/>
    </location>
</feature>
<feature type="disulfide bond" evidence="1">
    <location>
        <begin position="54"/>
        <end position="60"/>
    </location>
</feature>
<feature type="disulfide bond" evidence="1">
    <location>
        <begin position="58"/>
        <end position="67"/>
    </location>
</feature>
<feature type="disulfide bond" evidence="1">
    <location>
        <begin position="332"/>
        <end position="357"/>
    </location>
</feature>
<feature type="splice variant" id="VSP_062135" description="In isoform 1.">
    <location>
        <begin position="1"/>
        <end position="28"/>
    </location>
</feature>
<feature type="mutagenesis site" description="Decreases phosphorylation. Nearly abolishes phosphorylation; when associated with F-633 and F-671." evidence="5">
    <original>Y</original>
    <variation>F</variation>
    <location>
        <position position="600"/>
    </location>
</feature>
<feature type="mutagenesis site" description="Decreases phosphorylation. Nearly abolishes phosphorylation; when associated with F-600 and F-671." evidence="5">
    <original>Y</original>
    <variation>F</variation>
    <location>
        <position position="633"/>
    </location>
</feature>
<feature type="mutagenesis site" description="Decreases phosphorylation. Nearly abolishes phosphorylation; when associated with F-600 and F-633." evidence="5">
    <original>Y</original>
    <variation>F</variation>
    <location>
        <position position="671"/>
    </location>
</feature>
<feature type="sequence conflict" description="In Ref. 5; AAI11880." evidence="8" ref="5">
    <original>T</original>
    <variation>I</variation>
    <location>
        <position position="481"/>
    </location>
</feature>
<sequence>MVVAHSAATATTTPAATVTATVVMTTATMDLRDWLFLCYGLIAFLTEVIDSTTCPSVCRCDNGFIYCNDRGLTSIPSDIPDDATTLYLQNNQINNAGIPQDLKTKVKVQVIYLYENDLDEFPINLPRSLRELHLQDNNVRTIARDSLARIPLLEKLHLDDNSVSTVSIEEDAFADSKQLKLLFLSRNHLSSIPSGLPHTLEELRLDDNRISTIPLHAFKGLNSLRRLVLDGNLLANQRIADDTFSRLQNLTELSLVRNSLAAPPLNLPSAHLQKLYLQDNAISHIPYNTLAKMRELERLDLSNNNLTTLPRGLFDDLGNLAQLLLRNNPWFCGCNLMWLRDWVRARAAVVNVRGLMCQGPEKVRGMAIKDITSEMDECFEAGSQGGAANAAAKTTVSNHASATTPQGSLFTLKAKRPGLRLPDSNIDYPMATGDGAKTLVIQVKPLTADSIRITWKAMLPASSFRLSWLRLGHSPAVGSITETLVQGDKTEYLLTALEPKSTYIICMVTMETGNTYVADETPVCAKAETADSYGPTTTLNQEQNAGPMAGLPLAGIIGGAVALVFLFLVLGAICWYVHRAGELLTRERVYNRGSRRKDDYMESGTKKDNSILEIRGPGLQMLPINPYRSKEEYVVHTIFPSNGSSLCKGAHTIGYGTTRGYREAGIPDVDYSYT</sequence>
<gene>
    <name evidence="13" type="primary">Flrt1</name>
</gene>
<evidence type="ECO:0000250" key="1">
    <source>
        <dbReference type="UniProtKB" id="Q8BGT1"/>
    </source>
</evidence>
<evidence type="ECO:0000255" key="2"/>
<evidence type="ECO:0000255" key="3">
    <source>
        <dbReference type="PROSITE-ProRule" id="PRU00316"/>
    </source>
</evidence>
<evidence type="ECO:0000269" key="4">
    <source>
    </source>
</evidence>
<evidence type="ECO:0000269" key="5">
    <source>
    </source>
</evidence>
<evidence type="ECO:0000269" key="6">
    <source>
    </source>
</evidence>
<evidence type="ECO:0000269" key="7">
    <source>
    </source>
</evidence>
<evidence type="ECO:0000305" key="8"/>
<evidence type="ECO:0000305" key="9">
    <source>
    </source>
</evidence>
<evidence type="ECO:0000305" key="10">
    <source>
    </source>
</evidence>
<evidence type="ECO:0000305" key="11">
    <source>
    </source>
</evidence>
<evidence type="ECO:0000312" key="12">
    <source>
        <dbReference type="EMBL" id="AAR92201.1"/>
    </source>
</evidence>
<evidence type="ECO:0000312" key="13">
    <source>
        <dbReference type="MGI" id="MGI:3026647"/>
    </source>
</evidence>
<dbReference type="EMBL" id="AY495667">
    <property type="protein sequence ID" value="AAR92200.1"/>
    <property type="molecule type" value="mRNA"/>
</dbReference>
<dbReference type="EMBL" id="AY495668">
    <property type="protein sequence ID" value="AAR92201.1"/>
    <property type="molecule type" value="mRNA"/>
</dbReference>
<dbReference type="EMBL" id="AK031503">
    <property type="protein sequence ID" value="BAE20477.1"/>
    <property type="molecule type" value="mRNA"/>
</dbReference>
<dbReference type="EMBL" id="AC109619">
    <property type="status" value="NOT_ANNOTATED_CDS"/>
    <property type="molecule type" value="Genomic_DNA"/>
</dbReference>
<dbReference type="EMBL" id="CH466612">
    <property type="protein sequence ID" value="EDL33290.1"/>
    <property type="molecule type" value="Genomic_DNA"/>
</dbReference>
<dbReference type="EMBL" id="BC070403">
    <property type="protein sequence ID" value="AAH70403.1"/>
    <property type="molecule type" value="mRNA"/>
</dbReference>
<dbReference type="EMBL" id="BC111879">
    <property type="protein sequence ID" value="AAI11880.1"/>
    <property type="molecule type" value="mRNA"/>
</dbReference>
<dbReference type="EMBL" id="BC112383">
    <property type="protein sequence ID" value="AAI12384.1"/>
    <property type="molecule type" value="mRNA"/>
</dbReference>
<dbReference type="EMBL" id="BC138214">
    <property type="protein sequence ID" value="AAI38215.1"/>
    <property type="molecule type" value="mRNA"/>
</dbReference>
<dbReference type="CCDS" id="CCDS29519.1">
    <molecule id="Q6RKD8-2"/>
</dbReference>
<dbReference type="RefSeq" id="NP_958813.1">
    <molecule id="Q6RKD8-2"/>
    <property type="nucleotide sequence ID" value="NM_201411.2"/>
</dbReference>
<dbReference type="RefSeq" id="XP_006527232.1">
    <molecule id="Q6RKD8-2"/>
    <property type="nucleotide sequence ID" value="XM_006527169.3"/>
</dbReference>
<dbReference type="RefSeq" id="XP_006527233.1">
    <molecule id="Q6RKD8-2"/>
    <property type="nucleotide sequence ID" value="XM_006527170.4"/>
</dbReference>
<dbReference type="RefSeq" id="XP_006527234.1">
    <molecule id="Q6RKD8-2"/>
    <property type="nucleotide sequence ID" value="XM_006527171.5"/>
</dbReference>
<dbReference type="SMR" id="Q6RKD8"/>
<dbReference type="FunCoup" id="Q6RKD8">
    <property type="interactions" value="12"/>
</dbReference>
<dbReference type="STRING" id="10090.ENSMUSP00000109010"/>
<dbReference type="GlyConnect" id="2475">
    <property type="glycosylation" value="1 N-Linked glycan (1 site)"/>
</dbReference>
<dbReference type="GlyCosmos" id="Q6RKD8">
    <property type="glycosylation" value="2 sites, 1 glycan"/>
</dbReference>
<dbReference type="GlyGen" id="Q6RKD8">
    <property type="glycosylation" value="1 site"/>
</dbReference>
<dbReference type="iPTMnet" id="Q6RKD8"/>
<dbReference type="PhosphoSitePlus" id="Q6RKD8"/>
<dbReference type="PaxDb" id="10090-ENSMUSP00000109010"/>
<dbReference type="ProteomicsDB" id="273002"/>
<dbReference type="Antibodypedia" id="29135">
    <property type="antibodies" value="138 antibodies from 24 providers"/>
</dbReference>
<dbReference type="DNASU" id="396184"/>
<dbReference type="Ensembl" id="ENSMUST00000113383.4">
    <molecule id="Q6RKD8-2"/>
    <property type="protein sequence ID" value="ENSMUSP00000109010.3"/>
    <property type="gene ID" value="ENSMUSG00000047787.9"/>
</dbReference>
<dbReference type="GeneID" id="396184"/>
<dbReference type="KEGG" id="mmu:396184"/>
<dbReference type="UCSC" id="uc008gkh.3">
    <molecule id="Q6RKD8-2"/>
    <property type="organism name" value="mouse"/>
</dbReference>
<dbReference type="AGR" id="MGI:3026647"/>
<dbReference type="CTD" id="23769"/>
<dbReference type="MGI" id="MGI:3026647">
    <property type="gene designation" value="Flrt1"/>
</dbReference>
<dbReference type="VEuPathDB" id="HostDB:ENSMUSG00000047787"/>
<dbReference type="eggNOG" id="ENOG502QWDS">
    <property type="taxonomic scope" value="Eukaryota"/>
</dbReference>
<dbReference type="GeneTree" id="ENSGT00940000159375"/>
<dbReference type="HOGENOM" id="CLU_027624_0_0_1"/>
<dbReference type="InParanoid" id="Q6RKD8"/>
<dbReference type="OMA" id="WLYDWLH"/>
<dbReference type="OrthoDB" id="676979at2759"/>
<dbReference type="PhylomeDB" id="Q6RKD8"/>
<dbReference type="TreeFam" id="TF331598"/>
<dbReference type="Reactome" id="R-MMU-5654687">
    <property type="pathway name" value="Downstream signaling of activated FGFR1"/>
</dbReference>
<dbReference type="BioGRID-ORCS" id="396184">
    <property type="hits" value="2 hits in 79 CRISPR screens"/>
</dbReference>
<dbReference type="ChiTaRS" id="Flrt1">
    <property type="organism name" value="mouse"/>
</dbReference>
<dbReference type="PRO" id="PR:Q6RKD8"/>
<dbReference type="Proteomes" id="UP000000589">
    <property type="component" value="Chromosome 19"/>
</dbReference>
<dbReference type="RNAct" id="Q6RKD8">
    <property type="molecule type" value="protein"/>
</dbReference>
<dbReference type="Bgee" id="ENSMUSG00000047787">
    <property type="expression patterns" value="Expressed in olfactory epithelium and 150 other cell types or tissues"/>
</dbReference>
<dbReference type="GO" id="GO:0005911">
    <property type="term" value="C:cell-cell junction"/>
    <property type="evidence" value="ECO:0000314"/>
    <property type="project" value="UniProtKB"/>
</dbReference>
<dbReference type="GO" id="GO:0031410">
    <property type="term" value="C:cytoplasmic vesicle"/>
    <property type="evidence" value="ECO:0000314"/>
    <property type="project" value="UniProtKB"/>
</dbReference>
<dbReference type="GO" id="GO:0030659">
    <property type="term" value="C:cytoplasmic vesicle membrane"/>
    <property type="evidence" value="ECO:0007669"/>
    <property type="project" value="UniProtKB-SubCell"/>
</dbReference>
<dbReference type="GO" id="GO:0005789">
    <property type="term" value="C:endoplasmic reticulum membrane"/>
    <property type="evidence" value="ECO:0007669"/>
    <property type="project" value="UniProtKB-SubCell"/>
</dbReference>
<dbReference type="GO" id="GO:0005615">
    <property type="term" value="C:extracellular space"/>
    <property type="evidence" value="ECO:0000314"/>
    <property type="project" value="MGI"/>
</dbReference>
<dbReference type="GO" id="GO:0005925">
    <property type="term" value="C:focal adhesion"/>
    <property type="evidence" value="ECO:0007669"/>
    <property type="project" value="UniProtKB-SubCell"/>
</dbReference>
<dbReference type="GO" id="GO:0044306">
    <property type="term" value="C:neuron projection terminus"/>
    <property type="evidence" value="ECO:0000314"/>
    <property type="project" value="UniProtKB"/>
</dbReference>
<dbReference type="GO" id="GO:0032809">
    <property type="term" value="C:neuronal cell body membrane"/>
    <property type="evidence" value="ECO:0000314"/>
    <property type="project" value="UniProtKB"/>
</dbReference>
<dbReference type="GO" id="GO:0048471">
    <property type="term" value="C:perinuclear region of cytoplasm"/>
    <property type="evidence" value="ECO:0000314"/>
    <property type="project" value="UniProtKB"/>
</dbReference>
<dbReference type="GO" id="GO:0005886">
    <property type="term" value="C:plasma membrane"/>
    <property type="evidence" value="ECO:0000314"/>
    <property type="project" value="UniProtKB"/>
</dbReference>
<dbReference type="GO" id="GO:0005104">
    <property type="term" value="F:fibroblast growth factor receptor binding"/>
    <property type="evidence" value="ECO:0000353"/>
    <property type="project" value="UniProtKB"/>
</dbReference>
<dbReference type="GO" id="GO:0007155">
    <property type="term" value="P:cell adhesion"/>
    <property type="evidence" value="ECO:0007669"/>
    <property type="project" value="UniProtKB-KW"/>
</dbReference>
<dbReference type="GO" id="GO:0016358">
    <property type="term" value="P:dendrite development"/>
    <property type="evidence" value="ECO:0000315"/>
    <property type="project" value="UniProtKB"/>
</dbReference>
<dbReference type="GO" id="GO:0008543">
    <property type="term" value="P:fibroblast growth factor receptor signaling pathway"/>
    <property type="evidence" value="ECO:0000315"/>
    <property type="project" value="UniProtKB"/>
</dbReference>
<dbReference type="GO" id="GO:1990138">
    <property type="term" value="P:neuron projection extension"/>
    <property type="evidence" value="ECO:0000315"/>
    <property type="project" value="UniProtKB"/>
</dbReference>
<dbReference type="GO" id="GO:0051965">
    <property type="term" value="P:positive regulation of synapse assembly"/>
    <property type="evidence" value="ECO:0000314"/>
    <property type="project" value="MGI"/>
</dbReference>
<dbReference type="CDD" id="cd00063">
    <property type="entry name" value="FN3"/>
    <property type="match status" value="1"/>
</dbReference>
<dbReference type="FunFam" id="3.80.10.10:FF:000012">
    <property type="entry name" value="Leucine rich repeat containing 4"/>
    <property type="match status" value="1"/>
</dbReference>
<dbReference type="FunFam" id="2.60.40.10:FF:001067">
    <property type="entry name" value="Leucine-rich repeat transmembrane protein FLRT1"/>
    <property type="match status" value="1"/>
</dbReference>
<dbReference type="Gene3D" id="2.60.40.10">
    <property type="entry name" value="Immunoglobulins"/>
    <property type="match status" value="1"/>
</dbReference>
<dbReference type="Gene3D" id="3.80.10.10">
    <property type="entry name" value="Ribonuclease Inhibitor"/>
    <property type="match status" value="1"/>
</dbReference>
<dbReference type="InterPro" id="IPR000483">
    <property type="entry name" value="Cys-rich_flank_reg_C"/>
</dbReference>
<dbReference type="InterPro" id="IPR003961">
    <property type="entry name" value="FN3_dom"/>
</dbReference>
<dbReference type="InterPro" id="IPR036116">
    <property type="entry name" value="FN3_sf"/>
</dbReference>
<dbReference type="InterPro" id="IPR013783">
    <property type="entry name" value="Ig-like_fold"/>
</dbReference>
<dbReference type="InterPro" id="IPR001611">
    <property type="entry name" value="Leu-rich_rpt"/>
</dbReference>
<dbReference type="InterPro" id="IPR003591">
    <property type="entry name" value="Leu-rich_rpt_typical-subtyp"/>
</dbReference>
<dbReference type="InterPro" id="IPR032675">
    <property type="entry name" value="LRR_dom_sf"/>
</dbReference>
<dbReference type="InterPro" id="IPR000372">
    <property type="entry name" value="LRRNT"/>
</dbReference>
<dbReference type="InterPro" id="IPR050333">
    <property type="entry name" value="SLRP"/>
</dbReference>
<dbReference type="PANTHER" id="PTHR45712">
    <property type="entry name" value="AGAP008170-PA"/>
    <property type="match status" value="1"/>
</dbReference>
<dbReference type="PANTHER" id="PTHR45712:SF27">
    <property type="entry name" value="LRRNT DOMAIN-CONTAINING PROTEIN"/>
    <property type="match status" value="1"/>
</dbReference>
<dbReference type="Pfam" id="PF13855">
    <property type="entry name" value="LRR_8"/>
    <property type="match status" value="2"/>
</dbReference>
<dbReference type="Pfam" id="PF01463">
    <property type="entry name" value="LRRCT"/>
    <property type="match status" value="1"/>
</dbReference>
<dbReference type="Pfam" id="PF01462">
    <property type="entry name" value="LRRNT"/>
    <property type="match status" value="1"/>
</dbReference>
<dbReference type="SMART" id="SM00364">
    <property type="entry name" value="LRR_BAC"/>
    <property type="match status" value="4"/>
</dbReference>
<dbReference type="SMART" id="SM00369">
    <property type="entry name" value="LRR_TYP"/>
    <property type="match status" value="8"/>
</dbReference>
<dbReference type="SMART" id="SM00082">
    <property type="entry name" value="LRRCT"/>
    <property type="match status" value="1"/>
</dbReference>
<dbReference type="SMART" id="SM00013">
    <property type="entry name" value="LRRNT"/>
    <property type="match status" value="1"/>
</dbReference>
<dbReference type="SUPFAM" id="SSF49265">
    <property type="entry name" value="Fibronectin type III"/>
    <property type="match status" value="1"/>
</dbReference>
<dbReference type="SUPFAM" id="SSF52058">
    <property type="entry name" value="L domain-like"/>
    <property type="match status" value="2"/>
</dbReference>
<dbReference type="PROSITE" id="PS50853">
    <property type="entry name" value="FN3"/>
    <property type="match status" value="1"/>
</dbReference>
<dbReference type="PROSITE" id="PS51450">
    <property type="entry name" value="LRR"/>
    <property type="match status" value="8"/>
</dbReference>
<proteinExistence type="evidence at protein level"/>
<organism>
    <name type="scientific">Mus musculus</name>
    <name type="common">Mouse</name>
    <dbReference type="NCBI Taxonomy" id="10090"/>
    <lineage>
        <taxon>Eukaryota</taxon>
        <taxon>Metazoa</taxon>
        <taxon>Chordata</taxon>
        <taxon>Craniata</taxon>
        <taxon>Vertebrata</taxon>
        <taxon>Euteleostomi</taxon>
        <taxon>Mammalia</taxon>
        <taxon>Eutheria</taxon>
        <taxon>Euarchontoglires</taxon>
        <taxon>Glires</taxon>
        <taxon>Rodentia</taxon>
        <taxon>Myomorpha</taxon>
        <taxon>Muroidea</taxon>
        <taxon>Muridae</taxon>
        <taxon>Murinae</taxon>
        <taxon>Mus</taxon>
        <taxon>Mus</taxon>
    </lineage>
</organism>
<protein>
    <recommendedName>
        <fullName>Leucine-rich repeat transmembrane protein FLRT1</fullName>
    </recommendedName>
    <alternativeName>
        <fullName evidence="12">Fibronectin leucine rich transmembrane protein 1</fullName>
    </alternativeName>
</protein>
<reference key="1">
    <citation type="journal article" date="2006" name="Dev. Biol.">
        <title>Regulated expression of FLRT genes implies a functional role in the regulation of FGF signalling during mouse development.</title>
        <authorList>
            <person name="Haines B.P."/>
            <person name="Wheldon L.M."/>
            <person name="Summerbell D."/>
            <person name="Heath J.K."/>
            <person name="Rigby P.W.J."/>
        </authorList>
    </citation>
    <scope>NUCLEOTIDE SEQUENCE [MRNA] (ISOFORM 2)</scope>
    <scope>FUNCTION</scope>
    <scope>INTERACTION WITH FGFR1</scope>
    <scope>SUBCELLULAR LOCATION</scope>
    <scope>TOPOLOGY</scope>
    <scope>GLYCOSYLATION</scope>
    <scope>DEVELOPMENTAL STAGE</scope>
    <scope>INDUCTION BY FGF2</scope>
    <source>
        <strain>C57BL/6 X DBA/2J</strain>
        <tissue>Kidney</tissue>
    </source>
</reference>
<reference key="2">
    <citation type="journal article" date="2005" name="Science">
        <title>The transcriptional landscape of the mammalian genome.</title>
        <authorList>
            <person name="Carninci P."/>
            <person name="Kasukawa T."/>
            <person name="Katayama S."/>
            <person name="Gough J."/>
            <person name="Frith M.C."/>
            <person name="Maeda N."/>
            <person name="Oyama R."/>
            <person name="Ravasi T."/>
            <person name="Lenhard B."/>
            <person name="Wells C."/>
            <person name="Kodzius R."/>
            <person name="Shimokawa K."/>
            <person name="Bajic V.B."/>
            <person name="Brenner S.E."/>
            <person name="Batalov S."/>
            <person name="Forrest A.R."/>
            <person name="Zavolan M."/>
            <person name="Davis M.J."/>
            <person name="Wilming L.G."/>
            <person name="Aidinis V."/>
            <person name="Allen J.E."/>
            <person name="Ambesi-Impiombato A."/>
            <person name="Apweiler R."/>
            <person name="Aturaliya R.N."/>
            <person name="Bailey T.L."/>
            <person name="Bansal M."/>
            <person name="Baxter L."/>
            <person name="Beisel K.W."/>
            <person name="Bersano T."/>
            <person name="Bono H."/>
            <person name="Chalk A.M."/>
            <person name="Chiu K.P."/>
            <person name="Choudhary V."/>
            <person name="Christoffels A."/>
            <person name="Clutterbuck D.R."/>
            <person name="Crowe M.L."/>
            <person name="Dalla E."/>
            <person name="Dalrymple B.P."/>
            <person name="de Bono B."/>
            <person name="Della Gatta G."/>
            <person name="di Bernardo D."/>
            <person name="Down T."/>
            <person name="Engstrom P."/>
            <person name="Fagiolini M."/>
            <person name="Faulkner G."/>
            <person name="Fletcher C.F."/>
            <person name="Fukushima T."/>
            <person name="Furuno M."/>
            <person name="Futaki S."/>
            <person name="Gariboldi M."/>
            <person name="Georgii-Hemming P."/>
            <person name="Gingeras T.R."/>
            <person name="Gojobori T."/>
            <person name="Green R.E."/>
            <person name="Gustincich S."/>
            <person name="Harbers M."/>
            <person name="Hayashi Y."/>
            <person name="Hensch T.K."/>
            <person name="Hirokawa N."/>
            <person name="Hill D."/>
            <person name="Huminiecki L."/>
            <person name="Iacono M."/>
            <person name="Ikeo K."/>
            <person name="Iwama A."/>
            <person name="Ishikawa T."/>
            <person name="Jakt M."/>
            <person name="Kanapin A."/>
            <person name="Katoh M."/>
            <person name="Kawasawa Y."/>
            <person name="Kelso J."/>
            <person name="Kitamura H."/>
            <person name="Kitano H."/>
            <person name="Kollias G."/>
            <person name="Krishnan S.P."/>
            <person name="Kruger A."/>
            <person name="Kummerfeld S.K."/>
            <person name="Kurochkin I.V."/>
            <person name="Lareau L.F."/>
            <person name="Lazarevic D."/>
            <person name="Lipovich L."/>
            <person name="Liu J."/>
            <person name="Liuni S."/>
            <person name="McWilliam S."/>
            <person name="Madan Babu M."/>
            <person name="Madera M."/>
            <person name="Marchionni L."/>
            <person name="Matsuda H."/>
            <person name="Matsuzawa S."/>
            <person name="Miki H."/>
            <person name="Mignone F."/>
            <person name="Miyake S."/>
            <person name="Morris K."/>
            <person name="Mottagui-Tabar S."/>
            <person name="Mulder N."/>
            <person name="Nakano N."/>
            <person name="Nakauchi H."/>
            <person name="Ng P."/>
            <person name="Nilsson R."/>
            <person name="Nishiguchi S."/>
            <person name="Nishikawa S."/>
            <person name="Nori F."/>
            <person name="Ohara O."/>
            <person name="Okazaki Y."/>
            <person name="Orlando V."/>
            <person name="Pang K.C."/>
            <person name="Pavan W.J."/>
            <person name="Pavesi G."/>
            <person name="Pesole G."/>
            <person name="Petrovsky N."/>
            <person name="Piazza S."/>
            <person name="Reed J."/>
            <person name="Reid J.F."/>
            <person name="Ring B.Z."/>
            <person name="Ringwald M."/>
            <person name="Rost B."/>
            <person name="Ruan Y."/>
            <person name="Salzberg S.L."/>
            <person name="Sandelin A."/>
            <person name="Schneider C."/>
            <person name="Schoenbach C."/>
            <person name="Sekiguchi K."/>
            <person name="Semple C.A."/>
            <person name="Seno S."/>
            <person name="Sessa L."/>
            <person name="Sheng Y."/>
            <person name="Shibata Y."/>
            <person name="Shimada H."/>
            <person name="Shimada K."/>
            <person name="Silva D."/>
            <person name="Sinclair B."/>
            <person name="Sperling S."/>
            <person name="Stupka E."/>
            <person name="Sugiura K."/>
            <person name="Sultana R."/>
            <person name="Takenaka Y."/>
            <person name="Taki K."/>
            <person name="Tammoja K."/>
            <person name="Tan S.L."/>
            <person name="Tang S."/>
            <person name="Taylor M.S."/>
            <person name="Tegner J."/>
            <person name="Teichmann S.A."/>
            <person name="Ueda H.R."/>
            <person name="van Nimwegen E."/>
            <person name="Verardo R."/>
            <person name="Wei C.L."/>
            <person name="Yagi K."/>
            <person name="Yamanishi H."/>
            <person name="Zabarovsky E."/>
            <person name="Zhu S."/>
            <person name="Zimmer A."/>
            <person name="Hide W."/>
            <person name="Bult C."/>
            <person name="Grimmond S.M."/>
            <person name="Teasdale R.D."/>
            <person name="Liu E.T."/>
            <person name="Brusic V."/>
            <person name="Quackenbush J."/>
            <person name="Wahlestedt C."/>
            <person name="Mattick J.S."/>
            <person name="Hume D.A."/>
            <person name="Kai C."/>
            <person name="Sasaki D."/>
            <person name="Tomaru Y."/>
            <person name="Fukuda S."/>
            <person name="Kanamori-Katayama M."/>
            <person name="Suzuki M."/>
            <person name="Aoki J."/>
            <person name="Arakawa T."/>
            <person name="Iida J."/>
            <person name="Imamura K."/>
            <person name="Itoh M."/>
            <person name="Kato T."/>
            <person name="Kawaji H."/>
            <person name="Kawagashira N."/>
            <person name="Kawashima T."/>
            <person name="Kojima M."/>
            <person name="Kondo S."/>
            <person name="Konno H."/>
            <person name="Nakano K."/>
            <person name="Ninomiya N."/>
            <person name="Nishio T."/>
            <person name="Okada M."/>
            <person name="Plessy C."/>
            <person name="Shibata K."/>
            <person name="Shiraki T."/>
            <person name="Suzuki S."/>
            <person name="Tagami M."/>
            <person name="Waki K."/>
            <person name="Watahiki A."/>
            <person name="Okamura-Oho Y."/>
            <person name="Suzuki H."/>
            <person name="Kawai J."/>
            <person name="Hayashizaki Y."/>
        </authorList>
    </citation>
    <scope>NUCLEOTIDE SEQUENCE [LARGE SCALE MRNA] (ISOFORM 2)</scope>
    <source>
        <strain>C57BL/6J</strain>
        <tissue>Testis</tissue>
    </source>
</reference>
<reference key="3">
    <citation type="journal article" date="2009" name="PLoS Biol.">
        <title>Lineage-specific biology revealed by a finished genome assembly of the mouse.</title>
        <authorList>
            <person name="Church D.M."/>
            <person name="Goodstadt L."/>
            <person name="Hillier L.W."/>
            <person name="Zody M.C."/>
            <person name="Goldstein S."/>
            <person name="She X."/>
            <person name="Bult C.J."/>
            <person name="Agarwala R."/>
            <person name="Cherry J.L."/>
            <person name="DiCuccio M."/>
            <person name="Hlavina W."/>
            <person name="Kapustin Y."/>
            <person name="Meric P."/>
            <person name="Maglott D."/>
            <person name="Birtle Z."/>
            <person name="Marques A.C."/>
            <person name="Graves T."/>
            <person name="Zhou S."/>
            <person name="Teague B."/>
            <person name="Potamousis K."/>
            <person name="Churas C."/>
            <person name="Place M."/>
            <person name="Herschleb J."/>
            <person name="Runnheim R."/>
            <person name="Forrest D."/>
            <person name="Amos-Landgraf J."/>
            <person name="Schwartz D.C."/>
            <person name="Cheng Z."/>
            <person name="Lindblad-Toh K."/>
            <person name="Eichler E.E."/>
            <person name="Ponting C.P."/>
        </authorList>
    </citation>
    <scope>NUCLEOTIDE SEQUENCE [LARGE SCALE GENOMIC DNA]</scope>
    <source>
        <strain>C57BL/6J</strain>
    </source>
</reference>
<reference key="4">
    <citation type="submission" date="2005-07" db="EMBL/GenBank/DDBJ databases">
        <authorList>
            <person name="Mural R.J."/>
            <person name="Adams M.D."/>
            <person name="Myers E.W."/>
            <person name="Smith H.O."/>
            <person name="Venter J.C."/>
        </authorList>
    </citation>
    <scope>NUCLEOTIDE SEQUENCE [LARGE SCALE GENOMIC DNA]</scope>
</reference>
<reference key="5">
    <citation type="journal article" date="2004" name="Genome Res.">
        <title>The status, quality, and expansion of the NIH full-length cDNA project: the Mammalian Gene Collection (MGC).</title>
        <authorList>
            <consortium name="The MGC Project Team"/>
        </authorList>
    </citation>
    <scope>NUCLEOTIDE SEQUENCE [LARGE SCALE MRNA] (ISOFORM 2)</scope>
    <source>
        <strain>C57BL/6J</strain>
        <tissue>Brain</tissue>
    </source>
</reference>
<reference key="6">
    <citation type="journal article" date="2008" name="Dev. Biol.">
        <title>Ventral closure, headfold fusion and definitive endoderm migration defects in mouse embryos lacking the fibronectin leucine-rich transmembrane protein FLRT3.</title>
        <authorList>
            <person name="Maretto S."/>
            <person name="Mueller P.S."/>
            <person name="Aricescu A.R."/>
            <person name="Cho K.W."/>
            <person name="Bikoff E.K."/>
            <person name="Robertson E.J."/>
        </authorList>
    </citation>
    <scope>DEVELOPMENTAL STAGE</scope>
</reference>
<reference key="7">
    <citation type="journal article" date="2010" name="PLoS ONE">
        <title>Critical role of FLRT1 phosphorylation in the interdependent regulation of FLRT1 function and FGF receptor signalling.</title>
        <authorList>
            <person name="Wheldon L.M."/>
            <person name="Haines B.P."/>
            <person name="Rajappa R."/>
            <person name="Mason I."/>
            <person name="Rigby P.W."/>
            <person name="Heath J.K."/>
        </authorList>
    </citation>
    <scope>FUNCTION</scope>
    <scope>SUBCELLULAR LOCATION</scope>
    <scope>PHOSPHORYLATION AT TYR-600; TYR-633 AND TYR-671</scope>
    <scope>MUTAGENESIS OF TYR-600; TYR-633 AND TYR-671</scope>
</reference>
<reference key="8">
    <citation type="journal article" date="2011" name="EMBO J.">
        <title>FLRT2 and FLRT3 act as repulsive guidance cues for Unc5-positive neurons.</title>
        <authorList>
            <person name="Yamagishi S."/>
            <person name="Hampel F."/>
            <person name="Hata K."/>
            <person name="Del Toro D."/>
            <person name="Schwark M."/>
            <person name="Kvachnina E."/>
            <person name="Bastmeyer M."/>
            <person name="Yamashita T."/>
            <person name="Tarabykin V."/>
            <person name="Klein R."/>
            <person name="Egea J."/>
        </authorList>
    </citation>
    <scope>SUBCELLULAR LOCATION</scope>
    <scope>TOPOLOGY</scope>
    <scope>PROTEOLYTIC CLEAVAGE</scope>
    <scope>TISSUE SPECIFICITY</scope>
    <scope>DEVELOPMENTAL STAGE</scope>
    <scope>GLYCOSYLATION</scope>
</reference>
<reference key="9">
    <citation type="journal article" date="2012" name="Neuron">
        <title>FLRT proteins are endogenous latrophilin ligands and regulate excitatory synapse development.</title>
        <authorList>
            <person name="O'Sullivan M.L."/>
            <person name="de Wit J."/>
            <person name="Savas J.N."/>
            <person name="Comoletti D."/>
            <person name="Otto-Hitt S."/>
            <person name="Yates J.R. III"/>
            <person name="Ghosh A."/>
        </authorList>
    </citation>
    <scope>FUNCTION</scope>
    <scope>INTERACTION WITH ADGRL1 AND ADGRL3</scope>
    <scope>SUBCELLULAR LOCATION</scope>
</reference>
<keyword id="KW-0024">Alternative initiation</keyword>
<keyword id="KW-0130">Cell adhesion</keyword>
<keyword id="KW-0965">Cell junction</keyword>
<keyword id="KW-1003">Cell membrane</keyword>
<keyword id="KW-0966">Cell projection</keyword>
<keyword id="KW-0963">Cytoplasm</keyword>
<keyword id="KW-0968">Cytoplasmic vesicle</keyword>
<keyword id="KW-0217">Developmental protein</keyword>
<keyword id="KW-1015">Disulfide bond</keyword>
<keyword id="KW-0256">Endoplasmic reticulum</keyword>
<keyword id="KW-0325">Glycoprotein</keyword>
<keyword id="KW-0433">Leucine-rich repeat</keyword>
<keyword id="KW-0472">Membrane</keyword>
<keyword id="KW-0597">Phosphoprotein</keyword>
<keyword id="KW-1185">Reference proteome</keyword>
<keyword id="KW-0677">Repeat</keyword>
<keyword id="KW-0964">Secreted</keyword>
<keyword id="KW-0732">Signal</keyword>
<keyword id="KW-0812">Transmembrane</keyword>
<keyword id="KW-1133">Transmembrane helix</keyword>
<comment type="function">
    <text evidence="4 5 11">Plays a role in fibroblast growth factor-mediated signaling cascades that lead to the activation of MAP kinases (PubMed:16872596, PubMed:20421966). Promotes neurite outgrowth via FGFR1-mediated activation of downstream MAP kinases. Promotes an increase both in neurite number and in neurite length (PubMed:20421966). May play a role in cell-cell adhesion and cell guidance via its interaction with ADGRL1/LPHN1 and ADGRL3 (PubMed:22405201).</text>
</comment>
<comment type="subunit">
    <text evidence="4 7">Interacts with FGFR1 (PubMed:16872596). Interacts (via extracellular domain) with ADGRL1/LPHN1 and ADGRL3 (via olfactomedin-like domain) (PubMed:22405201).</text>
</comment>
<comment type="subcellular location">
    <subcellularLocation>
        <location evidence="4 5 7">Cell membrane</location>
        <topology evidence="4 6">Single-pass membrane protein</topology>
    </subcellularLocation>
    <subcellularLocation>
        <location evidence="9 10">Endoplasmic reticulum membrane</location>
    </subcellularLocation>
    <subcellularLocation>
        <location evidence="4 5">Cytoplasmic vesicle membrane</location>
    </subcellularLocation>
    <subcellularLocation>
        <location evidence="4 5">Cytoplasm</location>
        <location evidence="4 5">Perinuclear region</location>
    </subcellularLocation>
    <subcellularLocation>
        <location evidence="4">Cell junction</location>
        <location evidence="4">Focal adhesion</location>
    </subcellularLocation>
    <subcellularLocation>
        <location evidence="6">Secreted</location>
    </subcellularLocation>
    <subcellularLocation>
        <location evidence="5">Cell projection</location>
        <location evidence="5">Neuron projection</location>
    </subcellularLocation>
    <subcellularLocation>
        <location evidence="5">Cell junction</location>
    </subcellularLocation>
    <text evidence="4 5 6">In addition to its location at the cell membrane, colocalizes with FGFR1 in punctate perinuclear cytoplasmic vesicles (PubMed:16872596, PubMed:20421966). Detected along neurites and at contacts between neurite termini and other cells (PubMed:20421966). Proteolytic cleavage gives rise to a shedded ectodomain (PubMed:21673655).</text>
</comment>
<comment type="alternative products">
    <event type="alternative initiation"/>
    <isoform>
        <id>Q6RKD8-2</id>
        <name>2</name>
        <sequence type="displayed"/>
    </isoform>
    <isoform>
        <id>Q6RKD8-1</id>
        <name>1</name>
        <sequence type="described" ref="VSP_062135"/>
    </isoform>
</comment>
<comment type="tissue specificity">
    <text evidence="6">Detected in brain (at protein level).</text>
</comment>
<comment type="developmental stage">
    <text evidence="4">Detected at comparable levels in embryonic brain and in brain from ten day old animals (at protein level) (PubMed:16872596). Detected in neuroectoderm at 7.5 dpc. Detected in midbrain between 8.5 and 9 dpc (PubMed:18448090). Detected at 9.5 dpc in embryonic midbrain adjacent to the boundary between midbrain and forebrain (PubMed:16872596). At 10.5 dpc, expression is also detected in the eye, throughout the brain, the dorsal root ganglia and trigeminal ganglia, and in cells adjacent to the urogenital ridge in the torso (PubMed:16872596, PubMed:18448090). At 11 dpc, expression in midbrain is tightly restricted to the boundary between midbrain and hindbrain (PubMed:16872596).</text>
</comment>
<comment type="induction">
    <text evidence="4">Up-regulated by FGF2.</text>
</comment>
<comment type="PTM">
    <text evidence="5">Phosphorylated in response to FGFR1 signaling, but is not a direct substrate of FGFR1 or SRC. A mutant where the Tyr phosphorylation sites have been replaced by Phe displays constitutive FGFR1-dependent activation of downstream MAP kinases.</text>
</comment>
<comment type="PTM">
    <text evidence="4 6">N-glycosylated.</text>
</comment>
<comment type="PTM">
    <text evidence="6">Proteolytic cleavage in the juxtamembrane region gives rise to a soluble ectodomain.</text>
</comment>
<comment type="miscellaneous">
    <molecule>Isoform 2</molecule>
    <text evidence="8">The curated signal sequence though non-canonical is consistent with the proven topology.</text>
</comment>
<comment type="miscellaneous">
    <molecule>Isoform 1</molecule>
    <text evidence="8">Has a predicted canonical N-terminal signal sequence that is consistent with the proven topology of the protein.</text>
</comment>
<accession>Q6RKD8</accession>
<accession>A0A452J8F8</accession>
<accession>Q14DT7</accession>
<accession>Q6RKD9</accession>
<name>FLRT1_MOUSE</name>